<protein>
    <recommendedName>
        <fullName evidence="3">Arabinogalactan protein 16</fullName>
        <shortName evidence="3">AtAGP16</shortName>
    </recommendedName>
    <alternativeName>
        <fullName evidence="3">Arabinogalactan peptide 16</fullName>
        <shortName evidence="3">AG-peptide 16</shortName>
    </alternativeName>
</protein>
<accession>O82337</accession>
<keyword id="KW-0025">Alternative splicing</keyword>
<keyword id="KW-1003">Cell membrane</keyword>
<keyword id="KW-0903">Direct protein sequencing</keyword>
<keyword id="KW-0325">Glycoprotein</keyword>
<keyword id="KW-0336">GPI-anchor</keyword>
<keyword id="KW-0379">Hydroxylation</keyword>
<keyword id="KW-0449">Lipoprotein</keyword>
<keyword id="KW-0472">Membrane</keyword>
<keyword id="KW-0654">Proteoglycan</keyword>
<keyword id="KW-0873">Pyrrolidone carboxylic acid</keyword>
<keyword id="KW-1185">Reference proteome</keyword>
<keyword id="KW-0732">Signal</keyword>
<comment type="function">
    <text evidence="4">Proteoglycan that seems to be implicated in diverse developmental roles such as differentiation, cell-cell recognition, embryogenesis and programmed cell death.</text>
</comment>
<comment type="subcellular location">
    <subcellularLocation>
        <location evidence="4">Cell membrane</location>
        <topology evidence="2">Lipid-anchor</topology>
        <topology evidence="2">GPI-anchor</topology>
    </subcellularLocation>
</comment>
<comment type="alternative products">
    <event type="alternative splicing"/>
    <isoform>
        <id>O82337-1</id>
        <name>1</name>
        <sequence type="displayed"/>
    </isoform>
    <text>A number of isoforms are produced. According to EST sequences.</text>
</comment>
<comment type="tissue specificity">
    <text evidence="1">Predominantly expressed in flowers.</text>
</comment>
<comment type="PTM">
    <text evidence="1 2">Contains 4-hydroxyproline; hydroxylated on Pro-31, Pro-33 and Pro-35.</text>
</comment>
<comment type="PTM">
    <text evidence="6">O-glycosylated on hydroxyprolines; noncontiguous hydroxylproline residues are glycosylated with arabinogalactan.</text>
</comment>
<comment type="similarity">
    <text evidence="4">Belongs to the AG-peptide AGP family.</text>
</comment>
<proteinExistence type="evidence at protein level"/>
<gene>
    <name evidence="3" type="primary">AGP16</name>
    <name type="ordered locus">At2g46330</name>
    <name type="ORF">F11C10.2</name>
</gene>
<name>AGP16_ARATH</name>
<feature type="signal peptide" evidence="1 2">
    <location>
        <begin position="1"/>
        <end position="26"/>
    </location>
</feature>
<feature type="peptide" id="PRO_0000269019" description="Arabinogalactan protein 16" evidence="1 2">
    <location>
        <begin position="27"/>
        <end position="37"/>
    </location>
</feature>
<feature type="propeptide" id="PRO_0000269020" description="Removed in mature form" evidence="5 6">
    <location>
        <begin position="38"/>
        <end position="73"/>
    </location>
</feature>
<feature type="modified residue" description="Pyrrolidone carboxylic acid" evidence="1 2">
    <location>
        <position position="27"/>
    </location>
</feature>
<feature type="modified residue" description="4-hydroxyproline" evidence="1 2">
    <location>
        <position position="31"/>
    </location>
</feature>
<feature type="modified residue" description="4-hydroxyproline" evidence="1 2">
    <location>
        <position position="33"/>
    </location>
</feature>
<feature type="modified residue" description="4-hydroxyproline" evidence="1 2">
    <location>
        <position position="35"/>
    </location>
</feature>
<feature type="lipid moiety-binding region" description="GPI-anchor amidated serine" evidence="2">
    <location>
        <position position="37"/>
    </location>
</feature>
<feature type="glycosylation site" description="O-linked (Ara...) hydroxyproline" evidence="6">
    <location>
        <position position="31"/>
    </location>
</feature>
<feature type="glycosylation site" description="O-linked (Ara...) hydroxyproline" evidence="6">
    <location>
        <position position="33"/>
    </location>
</feature>
<feature type="glycosylation site" description="O-linked (Ara...) hydroxyproline" evidence="6">
    <location>
        <position position="35"/>
    </location>
</feature>
<dbReference type="EMBL" id="AF195897">
    <property type="protein sequence ID" value="AAG24284.1"/>
    <property type="molecule type" value="mRNA"/>
</dbReference>
<dbReference type="EMBL" id="AC005397">
    <property type="protein sequence ID" value="AAM15047.1"/>
    <property type="molecule type" value="Genomic_DNA"/>
</dbReference>
<dbReference type="EMBL" id="AC006526">
    <property type="protein sequence ID" value="AAD23036.1"/>
    <property type="molecule type" value="Genomic_DNA"/>
</dbReference>
<dbReference type="EMBL" id="CP002685">
    <property type="protein sequence ID" value="AEC10680.1"/>
    <property type="molecule type" value="Genomic_DNA"/>
</dbReference>
<dbReference type="EMBL" id="AF410276">
    <property type="protein sequence ID" value="AAK95262.1"/>
    <property type="molecule type" value="mRNA"/>
</dbReference>
<dbReference type="EMBL" id="AY097370">
    <property type="protein sequence ID" value="AAM19886.1"/>
    <property type="molecule type" value="mRNA"/>
</dbReference>
<dbReference type="EMBL" id="AY085631">
    <property type="protein sequence ID" value="AAM62852.1"/>
    <property type="molecule type" value="mRNA"/>
</dbReference>
<dbReference type="PIR" id="E84901">
    <property type="entry name" value="E84901"/>
</dbReference>
<dbReference type="RefSeq" id="NP_566070.3">
    <molecule id="O82337-1"/>
    <property type="nucleotide sequence ID" value="NM_130196.5"/>
</dbReference>
<dbReference type="BioGRID" id="4576">
    <property type="interactions" value="17"/>
</dbReference>
<dbReference type="FunCoup" id="O82337">
    <property type="interactions" value="74"/>
</dbReference>
<dbReference type="IntAct" id="O82337">
    <property type="interactions" value="16"/>
</dbReference>
<dbReference type="STRING" id="3702.O82337"/>
<dbReference type="GlyCosmos" id="O82337">
    <property type="glycosylation" value="3 sites, No reported glycans"/>
</dbReference>
<dbReference type="PaxDb" id="3702-AT2G46330.1"/>
<dbReference type="EnsemblPlants" id="AT2G46330.1">
    <molecule id="O82337-1"/>
    <property type="protein sequence ID" value="AT2G46330.1"/>
    <property type="gene ID" value="AT2G46330"/>
</dbReference>
<dbReference type="GeneID" id="819241"/>
<dbReference type="Gramene" id="AT2G46330.1">
    <molecule id="O82337-1"/>
    <property type="protein sequence ID" value="AT2G46330.1"/>
    <property type="gene ID" value="AT2G46330"/>
</dbReference>
<dbReference type="KEGG" id="ath:AT2G46330"/>
<dbReference type="Araport" id="AT2G46330"/>
<dbReference type="TAIR" id="AT2G46330">
    <property type="gene designation" value="AGP16"/>
</dbReference>
<dbReference type="eggNOG" id="ENOG502S708">
    <property type="taxonomic scope" value="Eukaryota"/>
</dbReference>
<dbReference type="HOGENOM" id="CLU_187330_0_0_1"/>
<dbReference type="InParanoid" id="O82337"/>
<dbReference type="OMA" id="FVHREMA"/>
<dbReference type="OrthoDB" id="777504at2759"/>
<dbReference type="PhylomeDB" id="O82337"/>
<dbReference type="PRO" id="PR:O82337"/>
<dbReference type="Proteomes" id="UP000006548">
    <property type="component" value="Chromosome 2"/>
</dbReference>
<dbReference type="ExpressionAtlas" id="O82337">
    <property type="expression patterns" value="baseline and differential"/>
</dbReference>
<dbReference type="GO" id="GO:0005886">
    <property type="term" value="C:plasma membrane"/>
    <property type="evidence" value="ECO:0007669"/>
    <property type="project" value="UniProtKB-SubCell"/>
</dbReference>
<dbReference type="GO" id="GO:0098552">
    <property type="term" value="C:side of membrane"/>
    <property type="evidence" value="ECO:0007669"/>
    <property type="project" value="UniProtKB-KW"/>
</dbReference>
<dbReference type="InterPro" id="IPR009424">
    <property type="entry name" value="AGP16/20/22/41"/>
</dbReference>
<dbReference type="PANTHER" id="PTHR33374">
    <property type="entry name" value="ARABINOGALACTAN PROTEIN 20"/>
    <property type="match status" value="1"/>
</dbReference>
<dbReference type="Pfam" id="PF06376">
    <property type="entry name" value="AGP"/>
    <property type="match status" value="1"/>
</dbReference>
<organism>
    <name type="scientific">Arabidopsis thaliana</name>
    <name type="common">Mouse-ear cress</name>
    <dbReference type="NCBI Taxonomy" id="3702"/>
    <lineage>
        <taxon>Eukaryota</taxon>
        <taxon>Viridiplantae</taxon>
        <taxon>Streptophyta</taxon>
        <taxon>Embryophyta</taxon>
        <taxon>Tracheophyta</taxon>
        <taxon>Spermatophyta</taxon>
        <taxon>Magnoliopsida</taxon>
        <taxon>eudicotyledons</taxon>
        <taxon>Gunneridae</taxon>
        <taxon>Pentapetalae</taxon>
        <taxon>rosids</taxon>
        <taxon>malvids</taxon>
        <taxon>Brassicales</taxon>
        <taxon>Brassicaceae</taxon>
        <taxon>Camelineae</taxon>
        <taxon>Arabidopsis</taxon>
    </lineage>
</organism>
<evidence type="ECO:0000269" key="1">
    <source>
    </source>
</evidence>
<evidence type="ECO:0000269" key="2">
    <source>
    </source>
</evidence>
<evidence type="ECO:0000303" key="3">
    <source>
    </source>
</evidence>
<evidence type="ECO:0000305" key="4"/>
<evidence type="ECO:0000305" key="5">
    <source>
    </source>
</evidence>
<evidence type="ECO:0000305" key="6">
    <source>
    </source>
</evidence>
<sequence>MASRNSVTGFALFSFVFAVILSLAGAQSLAPAPAPTSDGTSIDQGIAYLLMVVALVLTYLIHPLDASSSYSFF</sequence>
<reference key="1">
    <citation type="journal article" date="2000" name="Plant Cell">
        <title>The classical arabinogalactan protein gene family of Arabidopsis.</title>
        <authorList>
            <person name="Schultz C.J."/>
            <person name="Johnson K.L."/>
            <person name="Currie G."/>
            <person name="Bacic A."/>
        </authorList>
    </citation>
    <scope>NUCLEOTIDE SEQUENCE [MRNA]</scope>
    <scope>PROTEIN SEQUENCE OF 27-37</scope>
    <scope>PYROGLUTAMATE FORMATION AT GLN-27</scope>
    <scope>HYDROXYLATION AT PRO-31; PRO-33 AND PRO-35</scope>
    <scope>TISSUE SPECIFICITY</scope>
    <source>
        <strain>cv. Columbia</strain>
    </source>
</reference>
<reference key="2">
    <citation type="journal article" date="1999" name="Nature">
        <title>Sequence and analysis of chromosome 2 of the plant Arabidopsis thaliana.</title>
        <authorList>
            <person name="Lin X."/>
            <person name="Kaul S."/>
            <person name="Rounsley S.D."/>
            <person name="Shea T.P."/>
            <person name="Benito M.-I."/>
            <person name="Town C.D."/>
            <person name="Fujii C.Y."/>
            <person name="Mason T.M."/>
            <person name="Bowman C.L."/>
            <person name="Barnstead M.E."/>
            <person name="Feldblyum T.V."/>
            <person name="Buell C.R."/>
            <person name="Ketchum K.A."/>
            <person name="Lee J.J."/>
            <person name="Ronning C.M."/>
            <person name="Koo H.L."/>
            <person name="Moffat K.S."/>
            <person name="Cronin L.A."/>
            <person name="Shen M."/>
            <person name="Pai G."/>
            <person name="Van Aken S."/>
            <person name="Umayam L."/>
            <person name="Tallon L.J."/>
            <person name="Gill J.E."/>
            <person name="Adams M.D."/>
            <person name="Carrera A.J."/>
            <person name="Creasy T.H."/>
            <person name="Goodman H.M."/>
            <person name="Somerville C.R."/>
            <person name="Copenhaver G.P."/>
            <person name="Preuss D."/>
            <person name="Nierman W.C."/>
            <person name="White O."/>
            <person name="Eisen J.A."/>
            <person name="Salzberg S.L."/>
            <person name="Fraser C.M."/>
            <person name="Venter J.C."/>
        </authorList>
    </citation>
    <scope>NUCLEOTIDE SEQUENCE [LARGE SCALE GENOMIC DNA]</scope>
    <source>
        <strain>cv. Columbia</strain>
    </source>
</reference>
<reference key="3">
    <citation type="journal article" date="2017" name="Plant J.">
        <title>Araport11: a complete reannotation of the Arabidopsis thaliana reference genome.</title>
        <authorList>
            <person name="Cheng C.Y."/>
            <person name="Krishnakumar V."/>
            <person name="Chan A.P."/>
            <person name="Thibaud-Nissen F."/>
            <person name="Schobel S."/>
            <person name="Town C.D."/>
        </authorList>
    </citation>
    <scope>GENOME REANNOTATION</scope>
    <source>
        <strain>cv. Columbia</strain>
    </source>
</reference>
<reference key="4">
    <citation type="journal article" date="2003" name="Science">
        <title>Empirical analysis of transcriptional activity in the Arabidopsis genome.</title>
        <authorList>
            <person name="Yamada K."/>
            <person name="Lim J."/>
            <person name="Dale J.M."/>
            <person name="Chen H."/>
            <person name="Shinn P."/>
            <person name="Palm C.J."/>
            <person name="Southwick A.M."/>
            <person name="Wu H.C."/>
            <person name="Kim C.J."/>
            <person name="Nguyen M."/>
            <person name="Pham P.K."/>
            <person name="Cheuk R.F."/>
            <person name="Karlin-Newmann G."/>
            <person name="Liu S.X."/>
            <person name="Lam B."/>
            <person name="Sakano H."/>
            <person name="Wu T."/>
            <person name="Yu G."/>
            <person name="Miranda M."/>
            <person name="Quach H.L."/>
            <person name="Tripp M."/>
            <person name="Chang C.H."/>
            <person name="Lee J.M."/>
            <person name="Toriumi M.J."/>
            <person name="Chan M.M."/>
            <person name="Tang C.C."/>
            <person name="Onodera C.S."/>
            <person name="Deng J.M."/>
            <person name="Akiyama K."/>
            <person name="Ansari Y."/>
            <person name="Arakawa T."/>
            <person name="Banh J."/>
            <person name="Banno F."/>
            <person name="Bowser L."/>
            <person name="Brooks S.Y."/>
            <person name="Carninci P."/>
            <person name="Chao Q."/>
            <person name="Choy N."/>
            <person name="Enju A."/>
            <person name="Goldsmith A.D."/>
            <person name="Gurjal M."/>
            <person name="Hansen N.F."/>
            <person name="Hayashizaki Y."/>
            <person name="Johnson-Hopson C."/>
            <person name="Hsuan V.W."/>
            <person name="Iida K."/>
            <person name="Karnes M."/>
            <person name="Khan S."/>
            <person name="Koesema E."/>
            <person name="Ishida J."/>
            <person name="Jiang P.X."/>
            <person name="Jones T."/>
            <person name="Kawai J."/>
            <person name="Kamiya A."/>
            <person name="Meyers C."/>
            <person name="Nakajima M."/>
            <person name="Narusaka M."/>
            <person name="Seki M."/>
            <person name="Sakurai T."/>
            <person name="Satou M."/>
            <person name="Tamse R."/>
            <person name="Vaysberg M."/>
            <person name="Wallender E.K."/>
            <person name="Wong C."/>
            <person name="Yamamura Y."/>
            <person name="Yuan S."/>
            <person name="Shinozaki K."/>
            <person name="Davis R.W."/>
            <person name="Theologis A."/>
            <person name="Ecker J.R."/>
        </authorList>
    </citation>
    <scope>NUCLEOTIDE SEQUENCE [LARGE SCALE MRNA]</scope>
    <source>
        <strain>cv. Columbia</strain>
    </source>
</reference>
<reference key="5">
    <citation type="submission" date="2002-03" db="EMBL/GenBank/DDBJ databases">
        <title>Full-length cDNA from Arabidopsis thaliana.</title>
        <authorList>
            <person name="Brover V.V."/>
            <person name="Troukhan M.E."/>
            <person name="Alexandrov N.A."/>
            <person name="Lu Y.-P."/>
            <person name="Flavell R.B."/>
            <person name="Feldmann K.A."/>
        </authorList>
    </citation>
    <scope>NUCLEOTIDE SEQUENCE [LARGE SCALE MRNA]</scope>
</reference>
<reference key="6">
    <citation type="journal article" date="2004" name="J. Biol. Chem.">
        <title>Post-translational modifications of arabinogalactan-peptides of Arabidopsis thaliana. Endoplasmic reticulum and glycosylphosphatidylinositol-anchor signal cleavage sites and hydroxylation of proline.</title>
        <authorList>
            <person name="Schultz C.J."/>
            <person name="Ferguson K.L."/>
            <person name="Lahnstein J."/>
            <person name="Bacic A."/>
        </authorList>
    </citation>
    <scope>PROTEIN SEQUENCE OF 27-37</scope>
    <scope>HYDROXYLATION AT PRO-31; PRO-33 AND PRO-35</scope>
    <scope>PYROGLUTAMATE FORMATION AT GLN-27</scope>
    <scope>GLYCOSYLATION AT PRO-31; PRO-33 AND PRO-35</scope>
    <scope>GPI-ANCHOR AT SER-37</scope>
</reference>
<reference key="7">
    <citation type="journal article" date="2002" name="Plant Physiol.">
        <title>Using genomic resources to guide research directions. The arabinogalactan protein gene family as a test case.</title>
        <authorList>
            <person name="Schultz C.J."/>
            <person name="Rumsewicz M.P."/>
            <person name="Johnson K.L."/>
            <person name="Jones B.J."/>
            <person name="Gaspar Y.M."/>
            <person name="Bacic A."/>
        </authorList>
    </citation>
    <scope>GENE FAMILY</scope>
    <scope>NOMENCLATURE</scope>
</reference>